<reference key="1">
    <citation type="journal article" date="2005" name="Biochim. Biophys. Acta">
        <title>Characteristics of transxylosylation by beta-xylosidase from Aspergillus awamori K4.</title>
        <authorList>
            <person name="Kurakake M."/>
            <person name="Fujii T."/>
            <person name="Yata M."/>
            <person name="Okazaki T."/>
            <person name="Komaki T."/>
        </authorList>
    </citation>
    <scope>NUCLEOTIDE SEQUENCE [MRNA]</scope>
    <scope>FUNCTION</scope>
</reference>
<reference key="2">
    <citation type="submission" date="2008-06" db="EMBL/GenBank/DDBJ databases">
        <title>High-level expression of beta-xylosidase from Aspergillus awamori in Pichia pastoris for the enzymatic production of xylose-containing derivatives.</title>
        <authorList>
            <person name="Bobrov K.S."/>
            <person name="Piens K."/>
            <person name="Callewaert N."/>
            <person name="Shabalin K.A."/>
            <person name="Kulminskaya A.A."/>
        </authorList>
    </citation>
    <scope>NUCLEOTIDE SEQUENCE [GENOMIC DNA]</scope>
    <source>
        <strain>Var. X100</strain>
    </source>
</reference>
<comment type="function">
    <text evidence="3">Xylan 1,4-beta-xylosidase involved in the hydrolysis of xylan, a major structural heterogeneous polysaccharide found in plant biomass representing the second most abundant polysaccharide in the biosphere, after cellulose.</text>
</comment>
<comment type="catalytic activity">
    <reaction>
        <text>Hydrolysis of (1-&gt;4)-beta-D-xylans, to remove successive D-xylose residues from the non-reducing termini.</text>
        <dbReference type="EC" id="3.2.1.37"/>
    </reaction>
</comment>
<comment type="pathway">
    <text>Glycan degradation; xylan degradation.</text>
</comment>
<comment type="subcellular location">
    <subcellularLocation>
        <location evidence="1">Secreted</location>
    </subcellularLocation>
</comment>
<comment type="similarity">
    <text evidence="4">Belongs to the glycosyl hydrolase 3 family.</text>
</comment>
<sequence>MAHSMSRPVAATAAALLALALPQALAQANTSYVDYNIEANPDLYPLCIETIPLSFPDCQNGPLRSHLICDETATPYDRAASLISLFTLDELIANTGNTGLGVSRLGLPAYQVWSEALHGLDRANFSDSGAYNWATSFPQPILTTAALNRTLIHQIASIISTQGRAFNNAGRYGLDVYAPNINTFRHPVWGRGQETPGEDVSLAAVYAYEYITGIQGPDPESNLKLAATAKHYAGYDIENWHNHSRLGNDMNITQQDLSEYYTPQFHVAARDAKVQSVMCAYNAVNGVPACADSYFLQTLLRDTFGFVDHGYVSSDCDAAYNIYNPHGYASSQAAAAAEAILAGTDIDCGTTYQWHLNESITAGDLSRDDIEQGVIRLYTTLVQAGYFDSNTTKANNPYRDLSWSDVLETDAWNISYQAATQGIVLLKNSNNVLPLTEKAYPPSNTTVALIGPWANATTQLLGNYYGNAPYMISPRAAFEEAGYKVNFAEGTGISSTSTSGFAAALSAAQSADVIIYAGGIDNTLEAEALDRESIAWPGNQLDLIQKLASAAGKKPLIVLQMGGGQVDSSSLKNNTKVSALLWGGYPGQSGGFALRDIITGKKNPAGRLVTTQYPASYAEEFPATDMNLRPEGDNPGQTYKWYTGEAVYEFGHGLFYTTFAESSSNTTTKEVKLNIQDILSRTHEELASITQLPVLNFTANIRNTGKLESDYTAMVFANTSDAGPAPYPKKWLVGWDRLGEVKVGETRELRVPVEVGSFARVNEDGDWVLFPGTFELALNLERKVRVKVVLEGEEEVVLKWPGKE</sequence>
<proteinExistence type="evidence at transcript level"/>
<evidence type="ECO:0000250" key="1"/>
<evidence type="ECO:0000255" key="2"/>
<evidence type="ECO:0000269" key="3">
    <source>
    </source>
</evidence>
<evidence type="ECO:0000305" key="4"/>
<dbReference type="EC" id="3.2.1.37"/>
<dbReference type="EMBL" id="AB154359">
    <property type="protein sequence ID" value="BAE19756.1"/>
    <property type="molecule type" value="mRNA"/>
</dbReference>
<dbReference type="EMBL" id="EU854433">
    <property type="protein sequence ID" value="ACF61038.1"/>
    <property type="molecule type" value="Genomic_DNA"/>
</dbReference>
<dbReference type="SMR" id="Q4AEG8"/>
<dbReference type="CAZy" id="GH3">
    <property type="family name" value="Glycoside Hydrolase Family 3"/>
</dbReference>
<dbReference type="GlyCosmos" id="Q4AEG8">
    <property type="glycosylation" value="14 sites, No reported glycans"/>
</dbReference>
<dbReference type="BRENDA" id="3.2.1.37">
    <property type="organism ID" value="494"/>
</dbReference>
<dbReference type="UniPathway" id="UPA00114"/>
<dbReference type="GO" id="GO:0005576">
    <property type="term" value="C:extracellular region"/>
    <property type="evidence" value="ECO:0007669"/>
    <property type="project" value="UniProtKB-SubCell"/>
</dbReference>
<dbReference type="GO" id="GO:0046556">
    <property type="term" value="F:alpha-L-arabinofuranosidase activity"/>
    <property type="evidence" value="ECO:0007669"/>
    <property type="project" value="TreeGrafter"/>
</dbReference>
<dbReference type="GO" id="GO:0009044">
    <property type="term" value="F:xylan 1,4-beta-xylosidase activity"/>
    <property type="evidence" value="ECO:0007669"/>
    <property type="project" value="UniProtKB-EC"/>
</dbReference>
<dbReference type="GO" id="GO:0031222">
    <property type="term" value="P:arabinan catabolic process"/>
    <property type="evidence" value="ECO:0007669"/>
    <property type="project" value="TreeGrafter"/>
</dbReference>
<dbReference type="GO" id="GO:0045493">
    <property type="term" value="P:xylan catabolic process"/>
    <property type="evidence" value="ECO:0007669"/>
    <property type="project" value="UniProtKB-UniPathway"/>
</dbReference>
<dbReference type="FunFam" id="2.60.40.10:FF:001420">
    <property type="entry name" value="Exo-1,4-beta-xylosidase xlnD"/>
    <property type="match status" value="1"/>
</dbReference>
<dbReference type="FunFam" id="3.20.20.300:FF:000009">
    <property type="entry name" value="Exo-1,4-beta-xylosidase xlnD"/>
    <property type="match status" value="1"/>
</dbReference>
<dbReference type="FunFam" id="3.40.50.1700:FF:000007">
    <property type="entry name" value="Exo-1,4-beta-xylosidase xlnD"/>
    <property type="match status" value="1"/>
</dbReference>
<dbReference type="Gene3D" id="3.40.50.1700">
    <property type="entry name" value="Glycoside hydrolase family 3 C-terminal domain"/>
    <property type="match status" value="1"/>
</dbReference>
<dbReference type="Gene3D" id="3.20.20.300">
    <property type="entry name" value="Glycoside hydrolase, family 3, N-terminal domain"/>
    <property type="match status" value="1"/>
</dbReference>
<dbReference type="Gene3D" id="2.60.40.10">
    <property type="entry name" value="Immunoglobulins"/>
    <property type="match status" value="1"/>
</dbReference>
<dbReference type="InterPro" id="IPR044993">
    <property type="entry name" value="BXL"/>
</dbReference>
<dbReference type="InterPro" id="IPR026891">
    <property type="entry name" value="Fn3-like"/>
</dbReference>
<dbReference type="InterPro" id="IPR002772">
    <property type="entry name" value="Glyco_hydro_3_C"/>
</dbReference>
<dbReference type="InterPro" id="IPR036881">
    <property type="entry name" value="Glyco_hydro_3_C_sf"/>
</dbReference>
<dbReference type="InterPro" id="IPR001764">
    <property type="entry name" value="Glyco_hydro_3_N"/>
</dbReference>
<dbReference type="InterPro" id="IPR036962">
    <property type="entry name" value="Glyco_hydro_3_N_sf"/>
</dbReference>
<dbReference type="InterPro" id="IPR017853">
    <property type="entry name" value="Glycoside_hydrolase_SF"/>
</dbReference>
<dbReference type="InterPro" id="IPR013783">
    <property type="entry name" value="Ig-like_fold"/>
</dbReference>
<dbReference type="PANTHER" id="PTHR42721:SF13">
    <property type="entry name" value="EXO-1,4-BETA-XYLOSIDASE XLND"/>
    <property type="match status" value="1"/>
</dbReference>
<dbReference type="PANTHER" id="PTHR42721">
    <property type="entry name" value="SUGAR HYDROLASE-RELATED"/>
    <property type="match status" value="1"/>
</dbReference>
<dbReference type="Pfam" id="PF14310">
    <property type="entry name" value="Fn3-like"/>
    <property type="match status" value="1"/>
</dbReference>
<dbReference type="Pfam" id="PF00933">
    <property type="entry name" value="Glyco_hydro_3"/>
    <property type="match status" value="1"/>
</dbReference>
<dbReference type="Pfam" id="PF01915">
    <property type="entry name" value="Glyco_hydro_3_C"/>
    <property type="match status" value="1"/>
</dbReference>
<dbReference type="SMART" id="SM01217">
    <property type="entry name" value="Fn3_like"/>
    <property type="match status" value="1"/>
</dbReference>
<dbReference type="SUPFAM" id="SSF51445">
    <property type="entry name" value="(Trans)glycosidases"/>
    <property type="match status" value="1"/>
</dbReference>
<dbReference type="SUPFAM" id="SSF52279">
    <property type="entry name" value="Beta-D-glucan exohydrolase, C-terminal domain"/>
    <property type="match status" value="1"/>
</dbReference>
<organism>
    <name type="scientific">Aspergillus awamori</name>
    <name type="common">Black koji mold</name>
    <dbReference type="NCBI Taxonomy" id="105351"/>
    <lineage>
        <taxon>Eukaryota</taxon>
        <taxon>Fungi</taxon>
        <taxon>Dikarya</taxon>
        <taxon>Ascomycota</taxon>
        <taxon>Pezizomycotina</taxon>
        <taxon>Eurotiomycetes</taxon>
        <taxon>Eurotiomycetidae</taxon>
        <taxon>Eurotiales</taxon>
        <taxon>Aspergillaceae</taxon>
        <taxon>Aspergillus</taxon>
    </lineage>
</organism>
<feature type="signal peptide" evidence="2">
    <location>
        <begin position="1"/>
        <end position="26"/>
    </location>
</feature>
<feature type="chain" id="PRO_0000393284" description="Exo-1,4-beta-xylosidase xlnD">
    <location>
        <begin position="27"/>
        <end position="804"/>
    </location>
</feature>
<feature type="active site" evidence="1">
    <location>
        <position position="315"/>
    </location>
</feature>
<feature type="glycosylation site" description="N-linked (GlcNAc...) asparagine" evidence="2">
    <location>
        <position position="29"/>
    </location>
</feature>
<feature type="glycosylation site" description="N-linked (GlcNAc...) asparagine" evidence="2">
    <location>
        <position position="124"/>
    </location>
</feature>
<feature type="glycosylation site" description="N-linked (GlcNAc...) asparagine" evidence="2">
    <location>
        <position position="148"/>
    </location>
</feature>
<feature type="glycosylation site" description="N-linked (GlcNAc...) asparagine" evidence="2">
    <location>
        <position position="242"/>
    </location>
</feature>
<feature type="glycosylation site" description="N-linked (GlcNAc...) asparagine" evidence="2">
    <location>
        <position position="251"/>
    </location>
</feature>
<feature type="glycosylation site" description="N-linked (GlcNAc...) asparagine" evidence="2">
    <location>
        <position position="357"/>
    </location>
</feature>
<feature type="glycosylation site" description="N-linked (GlcNAc...) asparagine" evidence="2">
    <location>
        <position position="390"/>
    </location>
</feature>
<feature type="glycosylation site" description="N-linked (GlcNAc...) asparagine" evidence="2">
    <location>
        <position position="413"/>
    </location>
</feature>
<feature type="glycosylation site" description="N-linked (GlcNAc...) asparagine" evidence="2">
    <location>
        <position position="444"/>
    </location>
</feature>
<feature type="glycosylation site" description="N-linked (GlcNAc...) asparagine" evidence="2">
    <location>
        <position position="455"/>
    </location>
</feature>
<feature type="glycosylation site" description="N-linked (GlcNAc...) asparagine" evidence="2">
    <location>
        <position position="573"/>
    </location>
</feature>
<feature type="glycosylation site" description="N-linked (GlcNAc...) asparagine" evidence="2">
    <location>
        <position position="665"/>
    </location>
</feature>
<feature type="glycosylation site" description="N-linked (GlcNAc...) asparagine" evidence="2">
    <location>
        <position position="696"/>
    </location>
</feature>
<feature type="glycosylation site" description="N-linked (GlcNAc...) asparagine" evidence="2">
    <location>
        <position position="718"/>
    </location>
</feature>
<feature type="sequence conflict" description="In Ref. 2; ACF61038." evidence="4" ref="2">
    <original>I</original>
    <variation>V</variation>
    <location>
        <position position="37"/>
    </location>
</feature>
<feature type="sequence conflict" description="In Ref. 2; ACF61038." evidence="4" ref="2">
    <original>T</original>
    <variation>S</variation>
    <location>
        <position position="72"/>
    </location>
</feature>
<feature type="sequence conflict" description="In Ref. 2; ACF61038." evidence="4" ref="2">
    <original>A</original>
    <variation>S</variation>
    <location>
        <position position="130"/>
    </location>
</feature>
<feature type="sequence conflict" description="In Ref. 2; ACF61038." evidence="4" ref="2">
    <original>E</original>
    <variation>D</variation>
    <location>
        <position position="220"/>
    </location>
</feature>
<feature type="sequence conflict" description="In Ref. 2; ACF61038." evidence="4" ref="2">
    <original>Q</original>
    <variation>H</variation>
    <location>
        <position position="275"/>
    </location>
</feature>
<feature type="sequence conflict" description="In Ref. 2; ACF61038." evidence="4" ref="2">
    <original>Q</original>
    <variation>K</variation>
    <location>
        <position position="372"/>
    </location>
</feature>
<feature type="sequence conflict" description="In Ref. 2; ACF61038." evidence="4" ref="2">
    <original>S</original>
    <variation>T</variation>
    <location>
        <position position="402"/>
    </location>
</feature>
<feature type="sequence conflict" description="In Ref. 2; ACF61038." evidence="4" ref="2">
    <original>Q</original>
    <variation>R</variation>
    <location>
        <position position="509"/>
    </location>
</feature>
<feature type="sequence conflict" description="In Ref. 2; ACF61038." evidence="4" ref="2">
    <original>A</original>
    <variation>S</variation>
    <location>
        <position position="550"/>
    </location>
</feature>
<feature type="sequence conflict" description="In Ref. 2; ACF61038." evidence="4" ref="2">
    <original>K</original>
    <variation>S</variation>
    <location>
        <position position="553"/>
    </location>
</feature>
<feature type="sequence conflict" description="In Ref. 2; ACF61038." evidence="4" ref="2">
    <original>KVS</original>
    <variation>NVT</variation>
    <location>
        <begin position="576"/>
        <end position="578"/>
    </location>
</feature>
<feature type="sequence conflict" description="In Ref. 2; ACF61038." evidence="4" ref="2">
    <original>R</original>
    <variation>Q</variation>
    <location>
        <position position="681"/>
    </location>
</feature>
<feature type="sequence conflict" description="In Ref. 2; ACF61038." evidence="4" ref="2">
    <original>R</original>
    <variation>K</variation>
    <location>
        <position position="702"/>
    </location>
</feature>
<feature type="sequence conflict" description="In Ref. 2; ACF61038." evidence="4" ref="2">
    <original>K</original>
    <variation>V</variation>
    <location>
        <position position="729"/>
    </location>
</feature>
<feature type="sequence conflict" description="In Ref. 2; ACF61038." evidence="4" ref="2">
    <original>E</original>
    <variation>D</variation>
    <location>
        <position position="740"/>
    </location>
</feature>
<name>XYND_ASPAW</name>
<accession>Q4AEG8</accession>
<accession>B5AK91</accession>
<keyword id="KW-0119">Carbohydrate metabolism</keyword>
<keyword id="KW-0325">Glycoprotein</keyword>
<keyword id="KW-0326">Glycosidase</keyword>
<keyword id="KW-0378">Hydrolase</keyword>
<keyword id="KW-0624">Polysaccharide degradation</keyword>
<keyword id="KW-0964">Secreted</keyword>
<keyword id="KW-0732">Signal</keyword>
<keyword id="KW-0858">Xylan degradation</keyword>
<gene>
    <name type="primary">xlnD</name>
    <name type="synonym">xyl</name>
    <name type="synonym">xylA</name>
</gene>
<protein>
    <recommendedName>
        <fullName>Exo-1,4-beta-xylosidase xlnD</fullName>
        <ecNumber>3.2.1.37</ecNumber>
    </recommendedName>
    <alternativeName>
        <fullName>1,4-beta-D-xylan xylohydrolase xlnD</fullName>
    </alternativeName>
    <alternativeName>
        <fullName>Beta-xylosidase A</fullName>
    </alternativeName>
    <alternativeName>
        <fullName>Beta-xylosidase xlnD</fullName>
    </alternativeName>
    <alternativeName>
        <fullName>Xylobiase xlnD</fullName>
    </alternativeName>
</protein>